<reference key="1">
    <citation type="journal article" date="2008" name="PLoS ONE">
        <title>Genome biology of Actinobacillus pleuropneumoniae JL03, an isolate of serotype 3 prevalent in China.</title>
        <authorList>
            <person name="Xu Z."/>
            <person name="Zhou Y."/>
            <person name="Li L."/>
            <person name="Zhou R."/>
            <person name="Xiao S."/>
            <person name="Wan Y."/>
            <person name="Zhang S."/>
            <person name="Wang K."/>
            <person name="Li W."/>
            <person name="Li L."/>
            <person name="Jin H."/>
            <person name="Kang M."/>
            <person name="Dalai B."/>
            <person name="Li T."/>
            <person name="Liu L."/>
            <person name="Cheng Y."/>
            <person name="Zhang L."/>
            <person name="Xu T."/>
            <person name="Zheng H."/>
            <person name="Pu S."/>
            <person name="Wang B."/>
            <person name="Gu W."/>
            <person name="Zhang X.L."/>
            <person name="Zhu G.-F."/>
            <person name="Wang S."/>
            <person name="Zhao G.-P."/>
            <person name="Chen H."/>
        </authorList>
    </citation>
    <scope>NUCLEOTIDE SEQUENCE [LARGE SCALE GENOMIC DNA]</scope>
    <source>
        <strain>JL03</strain>
    </source>
</reference>
<dbReference type="EC" id="2.1.3.-" evidence="1"/>
<dbReference type="EMBL" id="CP000687">
    <property type="protein sequence ID" value="ABY69318.1"/>
    <property type="molecule type" value="Genomic_DNA"/>
</dbReference>
<dbReference type="RefSeq" id="WP_012262948.1">
    <property type="nucleotide sequence ID" value="NC_010278.1"/>
</dbReference>
<dbReference type="SMR" id="B0BP33"/>
<dbReference type="KEGG" id="apj:APJL_0755"/>
<dbReference type="HOGENOM" id="CLU_078475_0_0_6"/>
<dbReference type="Proteomes" id="UP000008547">
    <property type="component" value="Chromosome"/>
</dbReference>
<dbReference type="GO" id="GO:0016743">
    <property type="term" value="F:carboxyl- or carbamoyltransferase activity"/>
    <property type="evidence" value="ECO:0007669"/>
    <property type="project" value="UniProtKB-UniRule"/>
</dbReference>
<dbReference type="GO" id="GO:1904047">
    <property type="term" value="F:S-adenosyl-L-methionine binding"/>
    <property type="evidence" value="ECO:0007669"/>
    <property type="project" value="UniProtKB-UniRule"/>
</dbReference>
<dbReference type="GO" id="GO:0002098">
    <property type="term" value="P:tRNA wobble uridine modification"/>
    <property type="evidence" value="ECO:0007669"/>
    <property type="project" value="InterPro"/>
</dbReference>
<dbReference type="CDD" id="cd02440">
    <property type="entry name" value="AdoMet_MTases"/>
    <property type="match status" value="1"/>
</dbReference>
<dbReference type="Gene3D" id="3.40.50.150">
    <property type="entry name" value="Vaccinia Virus protein VP39"/>
    <property type="match status" value="1"/>
</dbReference>
<dbReference type="HAMAP" id="MF_01589">
    <property type="entry name" value="Cx_SAM_synthase"/>
    <property type="match status" value="1"/>
</dbReference>
<dbReference type="InterPro" id="IPR005271">
    <property type="entry name" value="CmoA"/>
</dbReference>
<dbReference type="InterPro" id="IPR041698">
    <property type="entry name" value="Methyltransf_25"/>
</dbReference>
<dbReference type="InterPro" id="IPR029063">
    <property type="entry name" value="SAM-dependent_MTases_sf"/>
</dbReference>
<dbReference type="NCBIfam" id="TIGR00740">
    <property type="entry name" value="carboxy-S-adenosyl-L-methionine synthase CmoA"/>
    <property type="match status" value="1"/>
</dbReference>
<dbReference type="NCBIfam" id="NF011995">
    <property type="entry name" value="PRK15451.1"/>
    <property type="match status" value="1"/>
</dbReference>
<dbReference type="PANTHER" id="PTHR43861:SF2">
    <property type="entry name" value="CARBOXY-S-ADENOSYL-L-METHIONINE SYNTHASE"/>
    <property type="match status" value="1"/>
</dbReference>
<dbReference type="PANTHER" id="PTHR43861">
    <property type="entry name" value="TRANS-ACONITATE 2-METHYLTRANSFERASE-RELATED"/>
    <property type="match status" value="1"/>
</dbReference>
<dbReference type="Pfam" id="PF13649">
    <property type="entry name" value="Methyltransf_25"/>
    <property type="match status" value="1"/>
</dbReference>
<dbReference type="PIRSF" id="PIRSF006325">
    <property type="entry name" value="MeTrfase_bac"/>
    <property type="match status" value="1"/>
</dbReference>
<dbReference type="SUPFAM" id="SSF53335">
    <property type="entry name" value="S-adenosyl-L-methionine-dependent methyltransferases"/>
    <property type="match status" value="1"/>
</dbReference>
<evidence type="ECO:0000255" key="1">
    <source>
        <dbReference type="HAMAP-Rule" id="MF_01589"/>
    </source>
</evidence>
<keyword id="KW-0949">S-adenosyl-L-methionine</keyword>
<keyword id="KW-0808">Transferase</keyword>
<gene>
    <name evidence="1" type="primary">cmoA</name>
    <name type="ordered locus">APJL_0755</name>
</gene>
<comment type="function">
    <text evidence="1">Catalyzes the conversion of S-adenosyl-L-methionine (SAM) to carboxy-S-adenosyl-L-methionine (Cx-SAM).</text>
</comment>
<comment type="catalytic activity">
    <reaction evidence="1">
        <text>prephenate + S-adenosyl-L-methionine = carboxy-S-adenosyl-L-methionine + 3-phenylpyruvate + H2O</text>
        <dbReference type="Rhea" id="RHEA:51692"/>
        <dbReference type="ChEBI" id="CHEBI:15377"/>
        <dbReference type="ChEBI" id="CHEBI:18005"/>
        <dbReference type="ChEBI" id="CHEBI:29934"/>
        <dbReference type="ChEBI" id="CHEBI:59789"/>
        <dbReference type="ChEBI" id="CHEBI:134278"/>
    </reaction>
</comment>
<comment type="subunit">
    <text evidence="1">Homodimer.</text>
</comment>
<comment type="similarity">
    <text evidence="1">Belongs to the class I-like SAM-binding methyltransferase superfamily. Cx-SAM synthase family.</text>
</comment>
<organism>
    <name type="scientific">Actinobacillus pleuropneumoniae serotype 3 (strain JL03)</name>
    <dbReference type="NCBI Taxonomy" id="434271"/>
    <lineage>
        <taxon>Bacteria</taxon>
        <taxon>Pseudomonadati</taxon>
        <taxon>Pseudomonadota</taxon>
        <taxon>Gammaproteobacteria</taxon>
        <taxon>Pasteurellales</taxon>
        <taxon>Pasteurellaceae</taxon>
        <taxon>Actinobacillus</taxon>
    </lineage>
</organism>
<sequence length="241" mass="27303">MNKDTIFSAPIEKLGDFTFDESVAEVFPDMIQRSVPGYSNIITAIGMLAQRFVTEGSQVYDLGCSRGAGILSIRRNLQTNQVKIIGVDNSQPMVERCRSHINAYHSDVPVEILCDDIRHIEIKNASMVVLNFTLQFLPRADRLELLTKIYHGLNPNGILVLSEKFTFTNQAMSELLIDLHHTFKRANGYSELEVSQKRTALENVMLTDSIETHKDRLKQAGFSQIELWFQCFNFGSMIAVK</sequence>
<proteinExistence type="inferred from homology"/>
<protein>
    <recommendedName>
        <fullName evidence="1">Carboxy-S-adenosyl-L-methionine synthase</fullName>
        <shortName evidence="1">Cx-SAM synthase</shortName>
        <ecNumber evidence="1">2.1.3.-</ecNumber>
    </recommendedName>
</protein>
<feature type="chain" id="PRO_1000201341" description="Carboxy-S-adenosyl-L-methionine synthase">
    <location>
        <begin position="1"/>
        <end position="241"/>
    </location>
</feature>
<feature type="binding site" evidence="1">
    <location>
        <position position="38"/>
    </location>
    <ligand>
        <name>S-adenosyl-L-methionine</name>
        <dbReference type="ChEBI" id="CHEBI:59789"/>
    </ligand>
</feature>
<feature type="binding site" evidence="1">
    <location>
        <begin position="63"/>
        <end position="65"/>
    </location>
    <ligand>
        <name>S-adenosyl-L-methionine</name>
        <dbReference type="ChEBI" id="CHEBI:59789"/>
    </ligand>
</feature>
<feature type="binding site" evidence="1">
    <location>
        <begin position="88"/>
        <end position="89"/>
    </location>
    <ligand>
        <name>S-adenosyl-L-methionine</name>
        <dbReference type="ChEBI" id="CHEBI:59789"/>
    </ligand>
</feature>
<feature type="binding site" evidence="1">
    <location>
        <begin position="116"/>
        <end position="117"/>
    </location>
    <ligand>
        <name>S-adenosyl-L-methionine</name>
        <dbReference type="ChEBI" id="CHEBI:59789"/>
    </ligand>
</feature>
<feature type="binding site" evidence="1">
    <location>
        <position position="131"/>
    </location>
    <ligand>
        <name>S-adenosyl-L-methionine</name>
        <dbReference type="ChEBI" id="CHEBI:59789"/>
    </ligand>
</feature>
<feature type="binding site" evidence="1">
    <location>
        <position position="198"/>
    </location>
    <ligand>
        <name>S-adenosyl-L-methionine</name>
        <dbReference type="ChEBI" id="CHEBI:59789"/>
    </ligand>
</feature>
<accession>B0BP33</accession>
<name>CMOA_ACTPJ</name>